<dbReference type="EMBL" id="CU329672">
    <property type="protein sequence ID" value="CAA20132.1"/>
    <property type="molecule type" value="Genomic_DNA"/>
</dbReference>
<dbReference type="PIR" id="T41177">
    <property type="entry name" value="T41177"/>
</dbReference>
<dbReference type="RefSeq" id="NP_588508.1">
    <property type="nucleotide sequence ID" value="NM_001023498.2"/>
</dbReference>
<dbReference type="SMR" id="O74482"/>
<dbReference type="BioGRID" id="275387">
    <property type="interactions" value="53"/>
</dbReference>
<dbReference type="FunCoup" id="O74482">
    <property type="interactions" value="213"/>
</dbReference>
<dbReference type="STRING" id="284812.O74482"/>
<dbReference type="PaxDb" id="4896-SPCC1840.09.1"/>
<dbReference type="EnsemblFungi" id="SPCC1840.09.1">
    <property type="protein sequence ID" value="SPCC1840.09.1:pep"/>
    <property type="gene ID" value="SPCC1840.09"/>
</dbReference>
<dbReference type="GeneID" id="2538806"/>
<dbReference type="KEGG" id="spo:2538806"/>
<dbReference type="PomBase" id="SPCC1840.09">
    <property type="gene designation" value="coq11"/>
</dbReference>
<dbReference type="VEuPathDB" id="FungiDB:SPCC1840.09"/>
<dbReference type="eggNOG" id="KOG4288">
    <property type="taxonomic scope" value="Eukaryota"/>
</dbReference>
<dbReference type="HOGENOM" id="CLU_055314_1_0_1"/>
<dbReference type="InParanoid" id="O74482"/>
<dbReference type="OMA" id="WERADIF"/>
<dbReference type="PhylomeDB" id="O74482"/>
<dbReference type="PRO" id="PR:O74482"/>
<dbReference type="Proteomes" id="UP000002485">
    <property type="component" value="Chromosome III"/>
</dbReference>
<dbReference type="GO" id="GO:0005759">
    <property type="term" value="C:mitochondrial matrix"/>
    <property type="evidence" value="ECO:0000250"/>
    <property type="project" value="PomBase"/>
</dbReference>
<dbReference type="GO" id="GO:0005739">
    <property type="term" value="C:mitochondrion"/>
    <property type="evidence" value="ECO:0000353"/>
    <property type="project" value="PomBase"/>
</dbReference>
<dbReference type="GO" id="GO:0044877">
    <property type="term" value="F:protein-containing complex binding"/>
    <property type="evidence" value="ECO:0000318"/>
    <property type="project" value="GO_Central"/>
</dbReference>
<dbReference type="GO" id="GO:0006744">
    <property type="term" value="P:ubiquinone biosynthetic process"/>
    <property type="evidence" value="ECO:0000314"/>
    <property type="project" value="PomBase"/>
</dbReference>
<dbReference type="Gene3D" id="3.40.50.720">
    <property type="entry name" value="NAD(P)-binding Rossmann-like Domain"/>
    <property type="match status" value="1"/>
</dbReference>
<dbReference type="InterPro" id="IPR051207">
    <property type="entry name" value="ComplexI_NDUFA9_subunit"/>
</dbReference>
<dbReference type="InterPro" id="IPR001509">
    <property type="entry name" value="Epimerase_deHydtase"/>
</dbReference>
<dbReference type="InterPro" id="IPR036291">
    <property type="entry name" value="NAD(P)-bd_dom_sf"/>
</dbReference>
<dbReference type="PANTHER" id="PTHR12126:SF16">
    <property type="entry name" value="MIOREX COMPLEX COMPONENT 2"/>
    <property type="match status" value="1"/>
</dbReference>
<dbReference type="PANTHER" id="PTHR12126">
    <property type="entry name" value="NADH-UBIQUINONE OXIDOREDUCTASE 39 KDA SUBUNIT-RELATED"/>
    <property type="match status" value="1"/>
</dbReference>
<dbReference type="Pfam" id="PF01370">
    <property type="entry name" value="Epimerase"/>
    <property type="match status" value="1"/>
</dbReference>
<dbReference type="SUPFAM" id="SSF51735">
    <property type="entry name" value="NAD(P)-binding Rossmann-fold domains"/>
    <property type="match status" value="1"/>
</dbReference>
<feature type="chain" id="PRO_0000318145" description="Ubiquinone biosynthesis protein coq11, mitochondrial">
    <location>
        <begin position="1"/>
        <end position="276"/>
    </location>
</feature>
<comment type="function">
    <text evidence="2">Acts in the coenzyme Q biosynthetic pathway.</text>
</comment>
<comment type="subcellular location">
    <subcellularLocation>
        <location evidence="1">Mitochondrion</location>
    </subcellularLocation>
</comment>
<comment type="disruption phenotype">
    <text evidence="2">Strongly decreases cellular coenzyme Q levels (PubMed:37156397). Increases cellular sulfide levels (PubMed:37156397). Decreases coq4 protein level (PubMed:37156397). Sensitive to hydrogen peroxide, copper(II) sulfate, and mildly sensitive to thermal stress (PubMed:37156397). Decreases growth on minimal medium (PubMed:37156397).</text>
</comment>
<comment type="similarity">
    <text evidence="3">Belongs to the NAD(P)-dependent epimerase/dehydratase family.</text>
</comment>
<keyword id="KW-0496">Mitochondrion</keyword>
<keyword id="KW-1185">Reference proteome</keyword>
<keyword id="KW-0831">Ubiquinone biosynthesis</keyword>
<name>COQ11_SCHPO</name>
<organism>
    <name type="scientific">Schizosaccharomyces pombe (strain 972 / ATCC 24843)</name>
    <name type="common">Fission yeast</name>
    <dbReference type="NCBI Taxonomy" id="284812"/>
    <lineage>
        <taxon>Eukaryota</taxon>
        <taxon>Fungi</taxon>
        <taxon>Dikarya</taxon>
        <taxon>Ascomycota</taxon>
        <taxon>Taphrinomycotina</taxon>
        <taxon>Schizosaccharomycetes</taxon>
        <taxon>Schizosaccharomycetales</taxon>
        <taxon>Schizosaccharomycetaceae</taxon>
        <taxon>Schizosaccharomyces</taxon>
    </lineage>
</organism>
<evidence type="ECO:0000269" key="1">
    <source>
    </source>
</evidence>
<evidence type="ECO:0000269" key="2">
    <source>
    </source>
</evidence>
<evidence type="ECO:0000305" key="3"/>
<evidence type="ECO:0000312" key="4">
    <source>
        <dbReference type="PomBase" id="SPCC1840.09"/>
    </source>
</evidence>
<protein>
    <recommendedName>
        <fullName evidence="3">Ubiquinone biosynthesis protein coq11, mitochondrial</fullName>
    </recommendedName>
</protein>
<gene>
    <name evidence="4" type="primary">coq11</name>
    <name evidence="4" type="ORF">SPCC1840.09</name>
</gene>
<sequence length="276" mass="29919">MKIVVLGGSGFLGHNICKLAIAKGYEVVSVSRRGAGGLHNKEPWMDDVEWETLDAQKDPNSLLPVLRDASAVVNSVGILMENNYKKILQNPRGPVSHLINSLSSNMFKTGQNPLAPKPEEAKQSKNKVTFEAINRDLAIETAKIAAKANVPVYCYVSAHAAAPGLDPRYIKTKREAEREISKISNLRSIFLRPGFMYNFNDRPFTGALASLFTVSSSINRATSGALNFLGTASAEPLPSEEVALAALEAISDPSVKGPVEISELKSMAHKFKQKSL</sequence>
<proteinExistence type="inferred from homology"/>
<reference key="1">
    <citation type="journal article" date="2002" name="Nature">
        <title>The genome sequence of Schizosaccharomyces pombe.</title>
        <authorList>
            <person name="Wood V."/>
            <person name="Gwilliam R."/>
            <person name="Rajandream M.A."/>
            <person name="Lyne M.H."/>
            <person name="Lyne R."/>
            <person name="Stewart A."/>
            <person name="Sgouros J.G."/>
            <person name="Peat N."/>
            <person name="Hayles J."/>
            <person name="Baker S.G."/>
            <person name="Basham D."/>
            <person name="Bowman S."/>
            <person name="Brooks K."/>
            <person name="Brown D."/>
            <person name="Brown S."/>
            <person name="Chillingworth T."/>
            <person name="Churcher C.M."/>
            <person name="Collins M."/>
            <person name="Connor R."/>
            <person name="Cronin A."/>
            <person name="Davis P."/>
            <person name="Feltwell T."/>
            <person name="Fraser A."/>
            <person name="Gentles S."/>
            <person name="Goble A."/>
            <person name="Hamlin N."/>
            <person name="Harris D.E."/>
            <person name="Hidalgo J."/>
            <person name="Hodgson G."/>
            <person name="Holroyd S."/>
            <person name="Hornsby T."/>
            <person name="Howarth S."/>
            <person name="Huckle E.J."/>
            <person name="Hunt S."/>
            <person name="Jagels K."/>
            <person name="James K.D."/>
            <person name="Jones L."/>
            <person name="Jones M."/>
            <person name="Leather S."/>
            <person name="McDonald S."/>
            <person name="McLean J."/>
            <person name="Mooney P."/>
            <person name="Moule S."/>
            <person name="Mungall K.L."/>
            <person name="Murphy L.D."/>
            <person name="Niblett D."/>
            <person name="Odell C."/>
            <person name="Oliver K."/>
            <person name="O'Neil S."/>
            <person name="Pearson D."/>
            <person name="Quail M.A."/>
            <person name="Rabbinowitsch E."/>
            <person name="Rutherford K.M."/>
            <person name="Rutter S."/>
            <person name="Saunders D."/>
            <person name="Seeger K."/>
            <person name="Sharp S."/>
            <person name="Skelton J."/>
            <person name="Simmonds M.N."/>
            <person name="Squares R."/>
            <person name="Squares S."/>
            <person name="Stevens K."/>
            <person name="Taylor K."/>
            <person name="Taylor R.G."/>
            <person name="Tivey A."/>
            <person name="Walsh S.V."/>
            <person name="Warren T."/>
            <person name="Whitehead S."/>
            <person name="Woodward J.R."/>
            <person name="Volckaert G."/>
            <person name="Aert R."/>
            <person name="Robben J."/>
            <person name="Grymonprez B."/>
            <person name="Weltjens I."/>
            <person name="Vanstreels E."/>
            <person name="Rieger M."/>
            <person name="Schaefer M."/>
            <person name="Mueller-Auer S."/>
            <person name="Gabel C."/>
            <person name="Fuchs M."/>
            <person name="Duesterhoeft A."/>
            <person name="Fritzc C."/>
            <person name="Holzer E."/>
            <person name="Moestl D."/>
            <person name="Hilbert H."/>
            <person name="Borzym K."/>
            <person name="Langer I."/>
            <person name="Beck A."/>
            <person name="Lehrach H."/>
            <person name="Reinhardt R."/>
            <person name="Pohl T.M."/>
            <person name="Eger P."/>
            <person name="Zimmermann W."/>
            <person name="Wedler H."/>
            <person name="Wambutt R."/>
            <person name="Purnelle B."/>
            <person name="Goffeau A."/>
            <person name="Cadieu E."/>
            <person name="Dreano S."/>
            <person name="Gloux S."/>
            <person name="Lelaure V."/>
            <person name="Mottier S."/>
            <person name="Galibert F."/>
            <person name="Aves S.J."/>
            <person name="Xiang Z."/>
            <person name="Hunt C."/>
            <person name="Moore K."/>
            <person name="Hurst S.M."/>
            <person name="Lucas M."/>
            <person name="Rochet M."/>
            <person name="Gaillardin C."/>
            <person name="Tallada V.A."/>
            <person name="Garzon A."/>
            <person name="Thode G."/>
            <person name="Daga R.R."/>
            <person name="Cruzado L."/>
            <person name="Jimenez J."/>
            <person name="Sanchez M."/>
            <person name="del Rey F."/>
            <person name="Benito J."/>
            <person name="Dominguez A."/>
            <person name="Revuelta J.L."/>
            <person name="Moreno S."/>
            <person name="Armstrong J."/>
            <person name="Forsburg S.L."/>
            <person name="Cerutti L."/>
            <person name="Lowe T."/>
            <person name="McCombie W.R."/>
            <person name="Paulsen I."/>
            <person name="Potashkin J."/>
            <person name="Shpakovski G.V."/>
            <person name="Ussery D."/>
            <person name="Barrell B.G."/>
            <person name="Nurse P."/>
        </authorList>
    </citation>
    <scope>NUCLEOTIDE SEQUENCE [LARGE SCALE GENOMIC DNA]</scope>
    <source>
        <strain>972 / ATCC 24843</strain>
    </source>
</reference>
<reference key="2">
    <citation type="journal article" date="2006" name="Nat. Biotechnol.">
        <title>ORFeome cloning and global analysis of protein localization in the fission yeast Schizosaccharomyces pombe.</title>
        <authorList>
            <person name="Matsuyama A."/>
            <person name="Arai R."/>
            <person name="Yashiroda Y."/>
            <person name="Shirai A."/>
            <person name="Kamata A."/>
            <person name="Sekido S."/>
            <person name="Kobayashi Y."/>
            <person name="Hashimoto A."/>
            <person name="Hamamoto M."/>
            <person name="Hiraoka Y."/>
            <person name="Horinouchi S."/>
            <person name="Yoshida M."/>
        </authorList>
    </citation>
    <scope>SUBCELLULAR LOCATION [LARGE SCALE ANALYSIS]</scope>
</reference>
<reference key="3">
    <citation type="journal article" date="2023" name="J. Biol. Chem.">
        <title>Identification of novel coenzyme Q10 biosynthetic proteins Coq11 and Coq12 in Schizosaccharomyces pombe.</title>
        <authorList>
            <person name="Nishida I."/>
            <person name="Ohmori Y."/>
            <person name="Yanai R."/>
            <person name="Nishihara S."/>
            <person name="Matsuo Y."/>
            <person name="Kaino T."/>
            <person name="Hirata D."/>
            <person name="Kawamukai M."/>
        </authorList>
    </citation>
    <scope>FUNCTION</scope>
    <scope>DISRUPTION PHENOTYPE</scope>
</reference>
<accession>O74482</accession>